<feature type="chain" id="PRO_0000264016" description="Peptidyl-tRNA hydrolase">
    <location>
        <begin position="1"/>
        <end position="179"/>
    </location>
</feature>
<feature type="active site" description="Proton acceptor" evidence="1">
    <location>
        <position position="20"/>
    </location>
</feature>
<feature type="binding site" evidence="1">
    <location>
        <position position="15"/>
    </location>
    <ligand>
        <name>tRNA</name>
        <dbReference type="ChEBI" id="CHEBI:17843"/>
    </ligand>
</feature>
<feature type="binding site" evidence="1">
    <location>
        <position position="66"/>
    </location>
    <ligand>
        <name>tRNA</name>
        <dbReference type="ChEBI" id="CHEBI:17843"/>
    </ligand>
</feature>
<feature type="binding site" evidence="1">
    <location>
        <position position="68"/>
    </location>
    <ligand>
        <name>tRNA</name>
        <dbReference type="ChEBI" id="CHEBI:17843"/>
    </ligand>
</feature>
<feature type="binding site" evidence="1">
    <location>
        <position position="114"/>
    </location>
    <ligand>
        <name>tRNA</name>
        <dbReference type="ChEBI" id="CHEBI:17843"/>
    </ligand>
</feature>
<feature type="site" description="Discriminates between blocked and unblocked aminoacyl-tRNA" evidence="1">
    <location>
        <position position="10"/>
    </location>
</feature>
<feature type="site" description="Stabilizes the basic form of H active site to accept a proton" evidence="1">
    <location>
        <position position="93"/>
    </location>
</feature>
<gene>
    <name evidence="1" type="primary">pth</name>
    <name type="ordered locus">CTA_0872</name>
</gene>
<sequence length="179" mass="19963">MVKLVVGIGNPGRQYVWTRHNIGFLLLDSLASRFLGAFREAPRLYASFAKVEISSEAVVLMKPTTYVNLTGKAVLAAKKFFDVSMEDILVVADDINREFGFVRFRQDCGSGGHNGIKNTTQILQSNHYWQLRLGVGRPSYPGAEGVADYVLSSFSLNEKEKLNDFLEKGIEEILPWLGC</sequence>
<proteinExistence type="inferred from homology"/>
<evidence type="ECO:0000255" key="1">
    <source>
        <dbReference type="HAMAP-Rule" id="MF_00083"/>
    </source>
</evidence>
<comment type="function">
    <text evidence="1">Hydrolyzes ribosome-free peptidyl-tRNAs (with 1 or more amino acids incorporated), which drop off the ribosome during protein synthesis, or as a result of ribosome stalling.</text>
</comment>
<comment type="function">
    <text evidence="1">Catalyzes the release of premature peptidyl moieties from peptidyl-tRNA molecules trapped in stalled 50S ribosomal subunits, and thus maintains levels of free tRNAs and 50S ribosomes.</text>
</comment>
<comment type="catalytic activity">
    <reaction evidence="1">
        <text>an N-acyl-L-alpha-aminoacyl-tRNA + H2O = an N-acyl-L-amino acid + a tRNA + H(+)</text>
        <dbReference type="Rhea" id="RHEA:54448"/>
        <dbReference type="Rhea" id="RHEA-COMP:10123"/>
        <dbReference type="Rhea" id="RHEA-COMP:13883"/>
        <dbReference type="ChEBI" id="CHEBI:15377"/>
        <dbReference type="ChEBI" id="CHEBI:15378"/>
        <dbReference type="ChEBI" id="CHEBI:59874"/>
        <dbReference type="ChEBI" id="CHEBI:78442"/>
        <dbReference type="ChEBI" id="CHEBI:138191"/>
        <dbReference type="EC" id="3.1.1.29"/>
    </reaction>
</comment>
<comment type="subunit">
    <text evidence="1">Monomer.</text>
</comment>
<comment type="subcellular location">
    <subcellularLocation>
        <location evidence="1">Cytoplasm</location>
    </subcellularLocation>
</comment>
<comment type="similarity">
    <text evidence="1">Belongs to the PTH family.</text>
</comment>
<reference key="1">
    <citation type="journal article" date="2005" name="Infect. Immun.">
        <title>Comparative genomic analysis of Chlamydia trachomatis oculotropic and genitotropic strains.</title>
        <authorList>
            <person name="Carlson J.H."/>
            <person name="Porcella S.F."/>
            <person name="McClarty G."/>
            <person name="Caldwell H.D."/>
        </authorList>
    </citation>
    <scope>NUCLEOTIDE SEQUENCE [LARGE SCALE GENOMIC DNA]</scope>
    <source>
        <strain>ATCC VR-571B / DSM 19440 / HAR-13</strain>
    </source>
</reference>
<dbReference type="EC" id="3.1.1.29" evidence="1"/>
<dbReference type="EMBL" id="CP000051">
    <property type="protein sequence ID" value="AAX51081.1"/>
    <property type="molecule type" value="Genomic_DNA"/>
</dbReference>
<dbReference type="RefSeq" id="WP_009873224.1">
    <property type="nucleotide sequence ID" value="NC_007429.1"/>
</dbReference>
<dbReference type="SMR" id="Q3KKP1"/>
<dbReference type="KEGG" id="cta:CTA_0872"/>
<dbReference type="HOGENOM" id="CLU_062456_3_1_0"/>
<dbReference type="Proteomes" id="UP000002532">
    <property type="component" value="Chromosome"/>
</dbReference>
<dbReference type="GO" id="GO:0005737">
    <property type="term" value="C:cytoplasm"/>
    <property type="evidence" value="ECO:0007669"/>
    <property type="project" value="UniProtKB-SubCell"/>
</dbReference>
<dbReference type="GO" id="GO:0004045">
    <property type="term" value="F:peptidyl-tRNA hydrolase activity"/>
    <property type="evidence" value="ECO:0007669"/>
    <property type="project" value="UniProtKB-UniRule"/>
</dbReference>
<dbReference type="GO" id="GO:0000049">
    <property type="term" value="F:tRNA binding"/>
    <property type="evidence" value="ECO:0007669"/>
    <property type="project" value="UniProtKB-UniRule"/>
</dbReference>
<dbReference type="GO" id="GO:0006515">
    <property type="term" value="P:protein quality control for misfolded or incompletely synthesized proteins"/>
    <property type="evidence" value="ECO:0007669"/>
    <property type="project" value="UniProtKB-UniRule"/>
</dbReference>
<dbReference type="GO" id="GO:0072344">
    <property type="term" value="P:rescue of stalled ribosome"/>
    <property type="evidence" value="ECO:0007669"/>
    <property type="project" value="UniProtKB-UniRule"/>
</dbReference>
<dbReference type="CDD" id="cd00462">
    <property type="entry name" value="PTH"/>
    <property type="match status" value="1"/>
</dbReference>
<dbReference type="FunFam" id="3.40.50.1470:FF:000001">
    <property type="entry name" value="Peptidyl-tRNA hydrolase"/>
    <property type="match status" value="1"/>
</dbReference>
<dbReference type="Gene3D" id="3.40.50.1470">
    <property type="entry name" value="Peptidyl-tRNA hydrolase"/>
    <property type="match status" value="1"/>
</dbReference>
<dbReference type="HAMAP" id="MF_00083">
    <property type="entry name" value="Pept_tRNA_hydro_bact"/>
    <property type="match status" value="1"/>
</dbReference>
<dbReference type="InterPro" id="IPR001328">
    <property type="entry name" value="Pept_tRNA_hydro"/>
</dbReference>
<dbReference type="InterPro" id="IPR018171">
    <property type="entry name" value="Pept_tRNA_hydro_CS"/>
</dbReference>
<dbReference type="InterPro" id="IPR036416">
    <property type="entry name" value="Pept_tRNA_hydro_sf"/>
</dbReference>
<dbReference type="NCBIfam" id="TIGR00447">
    <property type="entry name" value="pth"/>
    <property type="match status" value="1"/>
</dbReference>
<dbReference type="PANTHER" id="PTHR17224">
    <property type="entry name" value="PEPTIDYL-TRNA HYDROLASE"/>
    <property type="match status" value="1"/>
</dbReference>
<dbReference type="PANTHER" id="PTHR17224:SF1">
    <property type="entry name" value="PEPTIDYL-TRNA HYDROLASE"/>
    <property type="match status" value="1"/>
</dbReference>
<dbReference type="Pfam" id="PF01195">
    <property type="entry name" value="Pept_tRNA_hydro"/>
    <property type="match status" value="1"/>
</dbReference>
<dbReference type="SUPFAM" id="SSF53178">
    <property type="entry name" value="Peptidyl-tRNA hydrolase-like"/>
    <property type="match status" value="1"/>
</dbReference>
<dbReference type="PROSITE" id="PS01195">
    <property type="entry name" value="PEPT_TRNA_HYDROL_1"/>
    <property type="match status" value="1"/>
</dbReference>
<dbReference type="PROSITE" id="PS01196">
    <property type="entry name" value="PEPT_TRNA_HYDROL_2"/>
    <property type="match status" value="1"/>
</dbReference>
<protein>
    <recommendedName>
        <fullName evidence="1">Peptidyl-tRNA hydrolase</fullName>
        <shortName evidence="1">Pth</shortName>
        <ecNumber evidence="1">3.1.1.29</ecNumber>
    </recommendedName>
</protein>
<name>PTH_CHLTA</name>
<organism>
    <name type="scientific">Chlamydia trachomatis serovar A (strain ATCC VR-571B / DSM 19440 / HAR-13)</name>
    <dbReference type="NCBI Taxonomy" id="315277"/>
    <lineage>
        <taxon>Bacteria</taxon>
        <taxon>Pseudomonadati</taxon>
        <taxon>Chlamydiota</taxon>
        <taxon>Chlamydiia</taxon>
        <taxon>Chlamydiales</taxon>
        <taxon>Chlamydiaceae</taxon>
        <taxon>Chlamydia/Chlamydophila group</taxon>
        <taxon>Chlamydia</taxon>
    </lineage>
</organism>
<accession>Q3KKP1</accession>
<keyword id="KW-0963">Cytoplasm</keyword>
<keyword id="KW-0378">Hydrolase</keyword>
<keyword id="KW-0694">RNA-binding</keyword>
<keyword id="KW-0820">tRNA-binding</keyword>